<feature type="chain" id="PRO_0000420567" description="Probable isoaspartyl peptidase/L-asparaginase CG7860 alpha chain">
    <location>
        <begin position="1"/>
        <end position="187"/>
    </location>
</feature>
<feature type="chain" id="PRO_0000420568" description="Probable isoaspartyl peptidase/L-asparaginase CG7860 beta chain">
    <location>
        <begin position="188"/>
        <end position="332"/>
    </location>
</feature>
<feature type="active site" description="Nucleophile" evidence="1">
    <location>
        <position position="188"/>
    </location>
</feature>
<feature type="binding site" evidence="1">
    <location>
        <begin position="216"/>
        <end position="219"/>
    </location>
    <ligand>
        <name>substrate</name>
    </ligand>
</feature>
<feature type="binding site" evidence="1">
    <location>
        <begin position="239"/>
        <end position="242"/>
    </location>
    <ligand>
        <name>substrate</name>
    </ligand>
</feature>
<organism>
    <name type="scientific">Drosophila melanogaster</name>
    <name type="common">Fruit fly</name>
    <dbReference type="NCBI Taxonomy" id="7227"/>
    <lineage>
        <taxon>Eukaryota</taxon>
        <taxon>Metazoa</taxon>
        <taxon>Ecdysozoa</taxon>
        <taxon>Arthropoda</taxon>
        <taxon>Hexapoda</taxon>
        <taxon>Insecta</taxon>
        <taxon>Pterygota</taxon>
        <taxon>Neoptera</taxon>
        <taxon>Endopterygota</taxon>
        <taxon>Diptera</taxon>
        <taxon>Brachycera</taxon>
        <taxon>Muscomorpha</taxon>
        <taxon>Ephydroidea</taxon>
        <taxon>Drosophilidae</taxon>
        <taxon>Drosophila</taxon>
        <taxon>Sophophora</taxon>
    </lineage>
</organism>
<reference key="1">
    <citation type="journal article" date="2000" name="Science">
        <title>The genome sequence of Drosophila melanogaster.</title>
        <authorList>
            <person name="Adams M.D."/>
            <person name="Celniker S.E."/>
            <person name="Holt R.A."/>
            <person name="Evans C.A."/>
            <person name="Gocayne J.D."/>
            <person name="Amanatides P.G."/>
            <person name="Scherer S.E."/>
            <person name="Li P.W."/>
            <person name="Hoskins R.A."/>
            <person name="Galle R.F."/>
            <person name="George R.A."/>
            <person name="Lewis S.E."/>
            <person name="Richards S."/>
            <person name="Ashburner M."/>
            <person name="Henderson S.N."/>
            <person name="Sutton G.G."/>
            <person name="Wortman J.R."/>
            <person name="Yandell M.D."/>
            <person name="Zhang Q."/>
            <person name="Chen L.X."/>
            <person name="Brandon R.C."/>
            <person name="Rogers Y.-H.C."/>
            <person name="Blazej R.G."/>
            <person name="Champe M."/>
            <person name="Pfeiffer B.D."/>
            <person name="Wan K.H."/>
            <person name="Doyle C."/>
            <person name="Baxter E.G."/>
            <person name="Helt G."/>
            <person name="Nelson C.R."/>
            <person name="Miklos G.L.G."/>
            <person name="Abril J.F."/>
            <person name="Agbayani A."/>
            <person name="An H.-J."/>
            <person name="Andrews-Pfannkoch C."/>
            <person name="Baldwin D."/>
            <person name="Ballew R.M."/>
            <person name="Basu A."/>
            <person name="Baxendale J."/>
            <person name="Bayraktaroglu L."/>
            <person name="Beasley E.M."/>
            <person name="Beeson K.Y."/>
            <person name="Benos P.V."/>
            <person name="Berman B.P."/>
            <person name="Bhandari D."/>
            <person name="Bolshakov S."/>
            <person name="Borkova D."/>
            <person name="Botchan M.R."/>
            <person name="Bouck J."/>
            <person name="Brokstein P."/>
            <person name="Brottier P."/>
            <person name="Burtis K.C."/>
            <person name="Busam D.A."/>
            <person name="Butler H."/>
            <person name="Cadieu E."/>
            <person name="Center A."/>
            <person name="Chandra I."/>
            <person name="Cherry J.M."/>
            <person name="Cawley S."/>
            <person name="Dahlke C."/>
            <person name="Davenport L.B."/>
            <person name="Davies P."/>
            <person name="de Pablos B."/>
            <person name="Delcher A."/>
            <person name="Deng Z."/>
            <person name="Mays A.D."/>
            <person name="Dew I."/>
            <person name="Dietz S.M."/>
            <person name="Dodson K."/>
            <person name="Doup L.E."/>
            <person name="Downes M."/>
            <person name="Dugan-Rocha S."/>
            <person name="Dunkov B.C."/>
            <person name="Dunn P."/>
            <person name="Durbin K.J."/>
            <person name="Evangelista C.C."/>
            <person name="Ferraz C."/>
            <person name="Ferriera S."/>
            <person name="Fleischmann W."/>
            <person name="Fosler C."/>
            <person name="Gabrielian A.E."/>
            <person name="Garg N.S."/>
            <person name="Gelbart W.M."/>
            <person name="Glasser K."/>
            <person name="Glodek A."/>
            <person name="Gong F."/>
            <person name="Gorrell J.H."/>
            <person name="Gu Z."/>
            <person name="Guan P."/>
            <person name="Harris M."/>
            <person name="Harris N.L."/>
            <person name="Harvey D.A."/>
            <person name="Heiman T.J."/>
            <person name="Hernandez J.R."/>
            <person name="Houck J."/>
            <person name="Hostin D."/>
            <person name="Houston K.A."/>
            <person name="Howland T.J."/>
            <person name="Wei M.-H."/>
            <person name="Ibegwam C."/>
            <person name="Jalali M."/>
            <person name="Kalush F."/>
            <person name="Karpen G.H."/>
            <person name="Ke Z."/>
            <person name="Kennison J.A."/>
            <person name="Ketchum K.A."/>
            <person name="Kimmel B.E."/>
            <person name="Kodira C.D."/>
            <person name="Kraft C.L."/>
            <person name="Kravitz S."/>
            <person name="Kulp D."/>
            <person name="Lai Z."/>
            <person name="Lasko P."/>
            <person name="Lei Y."/>
            <person name="Levitsky A.A."/>
            <person name="Li J.H."/>
            <person name="Li Z."/>
            <person name="Liang Y."/>
            <person name="Lin X."/>
            <person name="Liu X."/>
            <person name="Mattei B."/>
            <person name="McIntosh T.C."/>
            <person name="McLeod M.P."/>
            <person name="McPherson D."/>
            <person name="Merkulov G."/>
            <person name="Milshina N.V."/>
            <person name="Mobarry C."/>
            <person name="Morris J."/>
            <person name="Moshrefi A."/>
            <person name="Mount S.M."/>
            <person name="Moy M."/>
            <person name="Murphy B."/>
            <person name="Murphy L."/>
            <person name="Muzny D.M."/>
            <person name="Nelson D.L."/>
            <person name="Nelson D.R."/>
            <person name="Nelson K.A."/>
            <person name="Nixon K."/>
            <person name="Nusskern D.R."/>
            <person name="Pacleb J.M."/>
            <person name="Palazzolo M."/>
            <person name="Pittman G.S."/>
            <person name="Pan S."/>
            <person name="Pollard J."/>
            <person name="Puri V."/>
            <person name="Reese M.G."/>
            <person name="Reinert K."/>
            <person name="Remington K."/>
            <person name="Saunders R.D.C."/>
            <person name="Scheeler F."/>
            <person name="Shen H."/>
            <person name="Shue B.C."/>
            <person name="Siden-Kiamos I."/>
            <person name="Simpson M."/>
            <person name="Skupski M.P."/>
            <person name="Smith T.J."/>
            <person name="Spier E."/>
            <person name="Spradling A.C."/>
            <person name="Stapleton M."/>
            <person name="Strong R."/>
            <person name="Sun E."/>
            <person name="Svirskas R."/>
            <person name="Tector C."/>
            <person name="Turner R."/>
            <person name="Venter E."/>
            <person name="Wang A.H."/>
            <person name="Wang X."/>
            <person name="Wang Z.-Y."/>
            <person name="Wassarman D.A."/>
            <person name="Weinstock G.M."/>
            <person name="Weissenbach J."/>
            <person name="Williams S.M."/>
            <person name="Woodage T."/>
            <person name="Worley K.C."/>
            <person name="Wu D."/>
            <person name="Yang S."/>
            <person name="Yao Q.A."/>
            <person name="Ye J."/>
            <person name="Yeh R.-F."/>
            <person name="Zaveri J.S."/>
            <person name="Zhan M."/>
            <person name="Zhang G."/>
            <person name="Zhao Q."/>
            <person name="Zheng L."/>
            <person name="Zheng X.H."/>
            <person name="Zhong F.N."/>
            <person name="Zhong W."/>
            <person name="Zhou X."/>
            <person name="Zhu S.C."/>
            <person name="Zhu X."/>
            <person name="Smith H.O."/>
            <person name="Gibbs R.A."/>
            <person name="Myers E.W."/>
            <person name="Rubin G.M."/>
            <person name="Venter J.C."/>
        </authorList>
    </citation>
    <scope>NUCLEOTIDE SEQUENCE [LARGE SCALE GENOMIC DNA]</scope>
    <source>
        <strain>Berkeley</strain>
    </source>
</reference>
<reference key="2">
    <citation type="journal article" date="2002" name="Genome Biol.">
        <title>Annotation of the Drosophila melanogaster euchromatic genome: a systematic review.</title>
        <authorList>
            <person name="Misra S."/>
            <person name="Crosby M.A."/>
            <person name="Mungall C.J."/>
            <person name="Matthews B.B."/>
            <person name="Campbell K.S."/>
            <person name="Hradecky P."/>
            <person name="Huang Y."/>
            <person name="Kaminker J.S."/>
            <person name="Millburn G.H."/>
            <person name="Prochnik S.E."/>
            <person name="Smith C.D."/>
            <person name="Tupy J.L."/>
            <person name="Whitfield E.J."/>
            <person name="Bayraktaroglu L."/>
            <person name="Berman B.P."/>
            <person name="Bettencourt B.R."/>
            <person name="Celniker S.E."/>
            <person name="de Grey A.D.N.J."/>
            <person name="Drysdale R.A."/>
            <person name="Harris N.L."/>
            <person name="Richter J."/>
            <person name="Russo S."/>
            <person name="Schroeder A.J."/>
            <person name="Shu S.Q."/>
            <person name="Stapleton M."/>
            <person name="Yamada C."/>
            <person name="Ashburner M."/>
            <person name="Gelbart W.M."/>
            <person name="Rubin G.M."/>
            <person name="Lewis S.E."/>
        </authorList>
    </citation>
    <scope>GENOME REANNOTATION</scope>
    <source>
        <strain>Berkeley</strain>
    </source>
</reference>
<reference key="3">
    <citation type="journal article" date="2002" name="Genome Biol.">
        <title>A Drosophila full-length cDNA resource.</title>
        <authorList>
            <person name="Stapleton M."/>
            <person name="Carlson J.W."/>
            <person name="Brokstein P."/>
            <person name="Yu C."/>
            <person name="Champe M."/>
            <person name="George R.A."/>
            <person name="Guarin H."/>
            <person name="Kronmiller B."/>
            <person name="Pacleb J.M."/>
            <person name="Park S."/>
            <person name="Wan K.H."/>
            <person name="Rubin G.M."/>
            <person name="Celniker S.E."/>
        </authorList>
    </citation>
    <scope>NUCLEOTIDE SEQUENCE [LARGE SCALE MRNA]</scope>
    <source>
        <strain>Berkeley</strain>
        <tissue>Embryo</tissue>
    </source>
</reference>
<sequence>MPRPVLLIHGGAGDISDSRIAGKFAGIKQALRSAWGLLSPDNGSGGGSALDAVEAAVRSMELDENFNAGYGSCLNTSGQVELEASLMEGRDLRAGCITLLRDVMHPITVARRLMEKQRHTFLGGAAAQELALATGSERLQPGALVTEGARLTLKEFEDQVAQGKDPFFARTELTDDKPVPKTDPSGETVGAVAMDASGQIVVGTSTGGITGKWPGRIGDTPILGSGTYADNCRGGVSTTGHGETLMRYNLAQRILSAMEYQGLSAQAAADKECREMTKRLGGTGGAIVVGHSGDLGISFTSRRMAWGYVQDGTIFYGIEGQVVHQEPFTLST</sequence>
<keyword id="KW-0068">Autocatalytic cleavage</keyword>
<keyword id="KW-0378">Hydrolase</keyword>
<keyword id="KW-0645">Protease</keyword>
<keyword id="KW-1185">Reference proteome</keyword>
<protein>
    <recommendedName>
        <fullName>Probable isoaspartyl peptidase/L-asparaginase CG7860</fullName>
        <ecNumber>3.4.19.5</ecNumber>
        <ecNumber>3.5.1.1</ecNumber>
    </recommendedName>
    <alternativeName>
        <fullName>Beta-aspartyl-peptidase CG7860</fullName>
    </alternativeName>
    <alternativeName>
        <fullName>Isoaspartyl dipeptidase CG7860</fullName>
    </alternativeName>
    <alternativeName>
        <fullName>L-asparagine amidohydrolase CG7860</fullName>
    </alternativeName>
    <component>
        <recommendedName>
            <fullName>Probable isoaspartyl peptidase/L-asparaginase CG7860 alpha chain</fullName>
        </recommendedName>
    </component>
    <component>
        <recommendedName>
            <fullName>Probable isoaspartyl peptidase/L-asparaginase CG7860 beta chain</fullName>
        </recommendedName>
    </component>
</protein>
<dbReference type="EC" id="3.4.19.5"/>
<dbReference type="EC" id="3.5.1.1"/>
<dbReference type="EMBL" id="AE014298">
    <property type="protein sequence ID" value="AAF48471.1"/>
    <property type="molecule type" value="Genomic_DNA"/>
</dbReference>
<dbReference type="EMBL" id="AY061292">
    <property type="protein sequence ID" value="AAL28840.1"/>
    <property type="molecule type" value="mRNA"/>
</dbReference>
<dbReference type="RefSeq" id="NP_001285275.1">
    <property type="nucleotide sequence ID" value="NM_001298346.1"/>
</dbReference>
<dbReference type="RefSeq" id="NP_573039.1">
    <property type="nucleotide sequence ID" value="NM_132811.3"/>
</dbReference>
<dbReference type="SMR" id="Q9VXT7"/>
<dbReference type="BioGRID" id="58839">
    <property type="interactions" value="3"/>
</dbReference>
<dbReference type="FunCoup" id="Q9VXT7">
    <property type="interactions" value="153"/>
</dbReference>
<dbReference type="IntAct" id="Q9VXT7">
    <property type="interactions" value="3"/>
</dbReference>
<dbReference type="STRING" id="7227.FBpp0073861"/>
<dbReference type="PaxDb" id="7227-FBpp0073861"/>
<dbReference type="DNASU" id="32488"/>
<dbReference type="EnsemblMetazoa" id="FBtr0074045">
    <property type="protein sequence ID" value="FBpp0073861"/>
    <property type="gene ID" value="FBgn0030653"/>
</dbReference>
<dbReference type="EnsemblMetazoa" id="FBtr0339691">
    <property type="protein sequence ID" value="FBpp0308748"/>
    <property type="gene ID" value="FBgn0030653"/>
</dbReference>
<dbReference type="GeneID" id="32488"/>
<dbReference type="KEGG" id="dme:Dmel_CG7860"/>
<dbReference type="UCSC" id="CG7860-RA">
    <property type="organism name" value="d. melanogaster"/>
</dbReference>
<dbReference type="AGR" id="FB:FBgn0030653"/>
<dbReference type="FlyBase" id="FBgn0030653">
    <property type="gene designation" value="CG7860"/>
</dbReference>
<dbReference type="VEuPathDB" id="VectorBase:FBgn0030653"/>
<dbReference type="eggNOG" id="KOG1592">
    <property type="taxonomic scope" value="Eukaryota"/>
</dbReference>
<dbReference type="GeneTree" id="ENSGT00950000183045"/>
<dbReference type="HOGENOM" id="CLU_021603_1_2_1"/>
<dbReference type="InParanoid" id="Q9VXT7"/>
<dbReference type="OMA" id="ILAAMEY"/>
<dbReference type="OrthoDB" id="2262349at2759"/>
<dbReference type="PhylomeDB" id="Q9VXT7"/>
<dbReference type="Reactome" id="R-DME-8964208">
    <property type="pathway name" value="Phenylalanine metabolism"/>
</dbReference>
<dbReference type="BioGRID-ORCS" id="32488">
    <property type="hits" value="0 hits in 3 CRISPR screens"/>
</dbReference>
<dbReference type="GenomeRNAi" id="32488"/>
<dbReference type="PRO" id="PR:Q9VXT7"/>
<dbReference type="Proteomes" id="UP000000803">
    <property type="component" value="Chromosome X"/>
</dbReference>
<dbReference type="Bgee" id="FBgn0030653">
    <property type="expression patterns" value="Expressed in embryonic/larval hemocyte (Drosophila) and 47 other cell types or tissues"/>
</dbReference>
<dbReference type="ExpressionAtlas" id="Q9VXT7">
    <property type="expression patterns" value="baseline and differential"/>
</dbReference>
<dbReference type="GO" id="GO:0005737">
    <property type="term" value="C:cytoplasm"/>
    <property type="evidence" value="ECO:0000250"/>
    <property type="project" value="UniProtKB"/>
</dbReference>
<dbReference type="GO" id="GO:0004067">
    <property type="term" value="F:asparaginase activity"/>
    <property type="evidence" value="ECO:0007669"/>
    <property type="project" value="UniProtKB-EC"/>
</dbReference>
<dbReference type="GO" id="GO:0008798">
    <property type="term" value="F:beta-aspartyl-peptidase activity"/>
    <property type="evidence" value="ECO:0000250"/>
    <property type="project" value="FlyBase"/>
</dbReference>
<dbReference type="GO" id="GO:0033345">
    <property type="term" value="P:asparagine catabolic process via L-aspartate"/>
    <property type="evidence" value="ECO:0000250"/>
    <property type="project" value="UniProtKB"/>
</dbReference>
<dbReference type="GO" id="GO:0006508">
    <property type="term" value="P:proteolysis"/>
    <property type="evidence" value="ECO:0007669"/>
    <property type="project" value="UniProtKB-KW"/>
</dbReference>
<dbReference type="CDD" id="cd04702">
    <property type="entry name" value="ASRGL1_like"/>
    <property type="match status" value="1"/>
</dbReference>
<dbReference type="FunFam" id="3.60.20.30:FF:000001">
    <property type="entry name" value="Isoaspartyl peptidase/L-asparaginase"/>
    <property type="match status" value="1"/>
</dbReference>
<dbReference type="Gene3D" id="3.60.20.30">
    <property type="entry name" value="(Glycosyl)asparaginase"/>
    <property type="match status" value="1"/>
</dbReference>
<dbReference type="InterPro" id="IPR033844">
    <property type="entry name" value="ASRGL1_meta"/>
</dbReference>
<dbReference type="InterPro" id="IPR029055">
    <property type="entry name" value="Ntn_hydrolases_N"/>
</dbReference>
<dbReference type="InterPro" id="IPR000246">
    <property type="entry name" value="Peptidase_T2"/>
</dbReference>
<dbReference type="PANTHER" id="PTHR10188:SF41">
    <property type="entry name" value="ISOASPARTYL PEPTIDASE_L-ASPARAGINASE"/>
    <property type="match status" value="1"/>
</dbReference>
<dbReference type="PANTHER" id="PTHR10188">
    <property type="entry name" value="L-ASPARAGINASE"/>
    <property type="match status" value="1"/>
</dbReference>
<dbReference type="Pfam" id="PF01112">
    <property type="entry name" value="Asparaginase_2"/>
    <property type="match status" value="1"/>
</dbReference>
<dbReference type="SUPFAM" id="SSF56235">
    <property type="entry name" value="N-terminal nucleophile aminohydrolases (Ntn hydrolases)"/>
    <property type="match status" value="1"/>
</dbReference>
<proteinExistence type="evidence at transcript level"/>
<gene>
    <name type="ORF">CG7860</name>
</gene>
<name>ASGL1_DROME</name>
<accession>Q9VXT7</accession>
<evidence type="ECO:0000250" key="1"/>
<evidence type="ECO:0000250" key="2">
    <source>
        <dbReference type="UniProtKB" id="Q7L266"/>
    </source>
</evidence>
<evidence type="ECO:0000305" key="3"/>
<comment type="function">
    <text evidence="1">Has both L-asparaginase and beta-aspartyl peptidase activity. Does not have aspartylglucosaminidase activity and is inactive toward GlcNAc-L-Asn. Likewise, has no activity toward glutamine.</text>
</comment>
<comment type="catalytic activity">
    <reaction evidence="2">
        <text>L-asparagine + H2O = L-aspartate + NH4(+)</text>
        <dbReference type="Rhea" id="RHEA:21016"/>
        <dbReference type="ChEBI" id="CHEBI:15377"/>
        <dbReference type="ChEBI" id="CHEBI:28938"/>
        <dbReference type="ChEBI" id="CHEBI:29991"/>
        <dbReference type="ChEBI" id="CHEBI:58048"/>
        <dbReference type="EC" id="3.5.1.1"/>
    </reaction>
</comment>
<comment type="catalytic activity">
    <reaction evidence="2">
        <text>Cleavage of a beta-linked Asp residue from the N-terminus of a polypeptide.</text>
        <dbReference type="EC" id="3.4.19.5"/>
    </reaction>
</comment>
<comment type="subunit">
    <text evidence="1">Heterodimer of an alpha and beta chain produced by autocleavage.</text>
</comment>
<comment type="PTM">
    <text evidence="1">Cleaved into an alpha and beta chain by autocatalysis; this activates the enzyme. The N-terminal residue of the beta subunit is responsible for the nucleophile hydrolase activity.</text>
</comment>
<comment type="similarity">
    <text evidence="3">Belongs to the Ntn-hydrolase family.</text>
</comment>